<organism>
    <name type="scientific">Staphylococcus aureus (strain USA300)</name>
    <dbReference type="NCBI Taxonomy" id="367830"/>
    <lineage>
        <taxon>Bacteria</taxon>
        <taxon>Bacillati</taxon>
        <taxon>Bacillota</taxon>
        <taxon>Bacilli</taxon>
        <taxon>Bacillales</taxon>
        <taxon>Staphylococcaceae</taxon>
        <taxon>Staphylococcus</taxon>
    </lineage>
</organism>
<keyword id="KW-0067">ATP-binding</keyword>
<keyword id="KW-0963">Cytoplasm</keyword>
<keyword id="KW-0235">DNA replication</keyword>
<keyword id="KW-0238">DNA-binding</keyword>
<keyword id="KW-0446">Lipid-binding</keyword>
<keyword id="KW-0547">Nucleotide-binding</keyword>
<name>DNAA_STAA3</name>
<protein>
    <recommendedName>
        <fullName evidence="1">Chromosomal replication initiator protein DnaA</fullName>
    </recommendedName>
</protein>
<proteinExistence type="inferred from homology"/>
<accession>Q2FKQ5</accession>
<gene>
    <name evidence="1" type="primary">dnaA</name>
    <name type="ordered locus">SAUSA300_0001</name>
</gene>
<comment type="function">
    <text evidence="1">Plays an essential role in the initiation and regulation of chromosomal replication. ATP-DnaA binds to the origin of replication (oriC) to initiate formation of the DNA replication initiation complex once per cell cycle. Binds the DnaA box (a 9 base pair repeat at the origin) and separates the double-stranded (ds)DNA. Forms a right-handed helical filament on oriC DNA; dsDNA binds to the exterior of the filament while single-stranded (ss)DNA is stabiized in the filament's interior. The ATP-DnaA-oriC complex binds and stabilizes one strand of the AT-rich DNA unwinding element (DUE), permitting loading of DNA polymerase. After initiation quickly degrades to an ADP-DnaA complex that is not apt for DNA replication. Binds acidic phospholipids.</text>
</comment>
<comment type="subunit">
    <text evidence="1">Oligomerizes as a right-handed, spiral filament on DNA at oriC.</text>
</comment>
<comment type="subcellular location">
    <subcellularLocation>
        <location evidence="1">Cytoplasm</location>
    </subcellularLocation>
</comment>
<comment type="domain">
    <text evidence="1">Domain I is involved in oligomerization and binding regulators, domain II is flexibile and of varying length in different bacteria, domain III forms the AAA+ region, while domain IV binds dsDNA.</text>
</comment>
<comment type="similarity">
    <text evidence="1">Belongs to the DnaA family.</text>
</comment>
<feature type="chain" id="PRO_1000048732" description="Chromosomal replication initiator protein DnaA">
    <location>
        <begin position="1"/>
        <end position="453"/>
    </location>
</feature>
<feature type="region of interest" description="Domain I, interacts with DnaA modulators" evidence="1">
    <location>
        <begin position="1"/>
        <end position="71"/>
    </location>
</feature>
<feature type="region of interest" description="Domain II" evidence="1">
    <location>
        <begin position="71"/>
        <end position="114"/>
    </location>
</feature>
<feature type="region of interest" description="Domain III, AAA+ region" evidence="1">
    <location>
        <begin position="115"/>
        <end position="331"/>
    </location>
</feature>
<feature type="region of interest" description="Domain IV, binds dsDNA" evidence="1">
    <location>
        <begin position="332"/>
        <end position="453"/>
    </location>
</feature>
<feature type="binding site" evidence="1">
    <location>
        <position position="159"/>
    </location>
    <ligand>
        <name>ATP</name>
        <dbReference type="ChEBI" id="CHEBI:30616"/>
    </ligand>
</feature>
<feature type="binding site" evidence="1">
    <location>
        <position position="161"/>
    </location>
    <ligand>
        <name>ATP</name>
        <dbReference type="ChEBI" id="CHEBI:30616"/>
    </ligand>
</feature>
<feature type="binding site" evidence="1">
    <location>
        <position position="162"/>
    </location>
    <ligand>
        <name>ATP</name>
        <dbReference type="ChEBI" id="CHEBI:30616"/>
    </ligand>
</feature>
<feature type="binding site" evidence="1">
    <location>
        <position position="163"/>
    </location>
    <ligand>
        <name>ATP</name>
        <dbReference type="ChEBI" id="CHEBI:30616"/>
    </ligand>
</feature>
<reference key="1">
    <citation type="journal article" date="2006" name="Lancet">
        <title>Complete genome sequence of USA300, an epidemic clone of community-acquired meticillin-resistant Staphylococcus aureus.</title>
        <authorList>
            <person name="Diep B.A."/>
            <person name="Gill S.R."/>
            <person name="Chang R.F."/>
            <person name="Phan T.H."/>
            <person name="Chen J.H."/>
            <person name="Davidson M.G."/>
            <person name="Lin F."/>
            <person name="Lin J."/>
            <person name="Carleton H.A."/>
            <person name="Mongodin E.F."/>
            <person name="Sensabaugh G.F."/>
            <person name="Perdreau-Remington F."/>
        </authorList>
    </citation>
    <scope>NUCLEOTIDE SEQUENCE [LARGE SCALE GENOMIC DNA]</scope>
    <source>
        <strain>USA300</strain>
    </source>
</reference>
<evidence type="ECO:0000255" key="1">
    <source>
        <dbReference type="HAMAP-Rule" id="MF_00377"/>
    </source>
</evidence>
<dbReference type="EMBL" id="CP000255">
    <property type="protein sequence ID" value="ABD22161.1"/>
    <property type="molecule type" value="Genomic_DNA"/>
</dbReference>
<dbReference type="RefSeq" id="WP_001290433.1">
    <property type="nucleotide sequence ID" value="NZ_CP027476.1"/>
</dbReference>
<dbReference type="SMR" id="Q2FKQ5"/>
<dbReference type="KEGG" id="saa:SAUSA300_0001"/>
<dbReference type="HOGENOM" id="CLU_026910_3_1_9"/>
<dbReference type="OMA" id="DFIHFYQ"/>
<dbReference type="Proteomes" id="UP000001939">
    <property type="component" value="Chromosome"/>
</dbReference>
<dbReference type="GO" id="GO:0005737">
    <property type="term" value="C:cytoplasm"/>
    <property type="evidence" value="ECO:0007669"/>
    <property type="project" value="UniProtKB-SubCell"/>
</dbReference>
<dbReference type="GO" id="GO:0005886">
    <property type="term" value="C:plasma membrane"/>
    <property type="evidence" value="ECO:0007669"/>
    <property type="project" value="TreeGrafter"/>
</dbReference>
<dbReference type="GO" id="GO:0005524">
    <property type="term" value="F:ATP binding"/>
    <property type="evidence" value="ECO:0007669"/>
    <property type="project" value="UniProtKB-UniRule"/>
</dbReference>
<dbReference type="GO" id="GO:0016887">
    <property type="term" value="F:ATP hydrolysis activity"/>
    <property type="evidence" value="ECO:0007669"/>
    <property type="project" value="InterPro"/>
</dbReference>
<dbReference type="GO" id="GO:0003688">
    <property type="term" value="F:DNA replication origin binding"/>
    <property type="evidence" value="ECO:0007669"/>
    <property type="project" value="UniProtKB-UniRule"/>
</dbReference>
<dbReference type="GO" id="GO:0008289">
    <property type="term" value="F:lipid binding"/>
    <property type="evidence" value="ECO:0007669"/>
    <property type="project" value="UniProtKB-KW"/>
</dbReference>
<dbReference type="GO" id="GO:0006270">
    <property type="term" value="P:DNA replication initiation"/>
    <property type="evidence" value="ECO:0007669"/>
    <property type="project" value="UniProtKB-UniRule"/>
</dbReference>
<dbReference type="GO" id="GO:0006275">
    <property type="term" value="P:regulation of DNA replication"/>
    <property type="evidence" value="ECO:0007669"/>
    <property type="project" value="UniProtKB-UniRule"/>
</dbReference>
<dbReference type="CDD" id="cd00009">
    <property type="entry name" value="AAA"/>
    <property type="match status" value="1"/>
</dbReference>
<dbReference type="CDD" id="cd06571">
    <property type="entry name" value="Bac_DnaA_C"/>
    <property type="match status" value="1"/>
</dbReference>
<dbReference type="FunFam" id="1.10.1750.10:FF:000003">
    <property type="entry name" value="Chromosomal replication initiator protein DnaA"/>
    <property type="match status" value="1"/>
</dbReference>
<dbReference type="FunFam" id="1.10.8.60:FF:000003">
    <property type="entry name" value="Chromosomal replication initiator protein DnaA"/>
    <property type="match status" value="1"/>
</dbReference>
<dbReference type="FunFam" id="3.40.50.300:FF:000150">
    <property type="entry name" value="Chromosomal replication initiator protein DnaA"/>
    <property type="match status" value="1"/>
</dbReference>
<dbReference type="Gene3D" id="1.10.1750.10">
    <property type="match status" value="1"/>
</dbReference>
<dbReference type="Gene3D" id="1.10.8.60">
    <property type="match status" value="1"/>
</dbReference>
<dbReference type="Gene3D" id="3.30.300.180">
    <property type="match status" value="1"/>
</dbReference>
<dbReference type="Gene3D" id="3.40.50.300">
    <property type="entry name" value="P-loop containing nucleotide triphosphate hydrolases"/>
    <property type="match status" value="1"/>
</dbReference>
<dbReference type="HAMAP" id="MF_00377">
    <property type="entry name" value="DnaA_bact"/>
    <property type="match status" value="1"/>
</dbReference>
<dbReference type="InterPro" id="IPR003593">
    <property type="entry name" value="AAA+_ATPase"/>
</dbReference>
<dbReference type="InterPro" id="IPR001957">
    <property type="entry name" value="Chromosome_initiator_DnaA"/>
</dbReference>
<dbReference type="InterPro" id="IPR020591">
    <property type="entry name" value="Chromosome_initiator_DnaA-like"/>
</dbReference>
<dbReference type="InterPro" id="IPR018312">
    <property type="entry name" value="Chromosome_initiator_DnaA_CS"/>
</dbReference>
<dbReference type="InterPro" id="IPR013159">
    <property type="entry name" value="DnaA_C"/>
</dbReference>
<dbReference type="InterPro" id="IPR013317">
    <property type="entry name" value="DnaA_dom"/>
</dbReference>
<dbReference type="InterPro" id="IPR024633">
    <property type="entry name" value="DnaA_N_dom"/>
</dbReference>
<dbReference type="InterPro" id="IPR038454">
    <property type="entry name" value="DnaA_N_sf"/>
</dbReference>
<dbReference type="InterPro" id="IPR027417">
    <property type="entry name" value="P-loop_NTPase"/>
</dbReference>
<dbReference type="InterPro" id="IPR010921">
    <property type="entry name" value="Trp_repressor/repl_initiator"/>
</dbReference>
<dbReference type="NCBIfam" id="TIGR00362">
    <property type="entry name" value="DnaA"/>
    <property type="match status" value="1"/>
</dbReference>
<dbReference type="PANTHER" id="PTHR30050">
    <property type="entry name" value="CHROMOSOMAL REPLICATION INITIATOR PROTEIN DNAA"/>
    <property type="match status" value="1"/>
</dbReference>
<dbReference type="PANTHER" id="PTHR30050:SF2">
    <property type="entry name" value="CHROMOSOMAL REPLICATION INITIATOR PROTEIN DNAA"/>
    <property type="match status" value="1"/>
</dbReference>
<dbReference type="Pfam" id="PF00308">
    <property type="entry name" value="Bac_DnaA"/>
    <property type="match status" value="1"/>
</dbReference>
<dbReference type="Pfam" id="PF08299">
    <property type="entry name" value="Bac_DnaA_C"/>
    <property type="match status" value="1"/>
</dbReference>
<dbReference type="Pfam" id="PF11638">
    <property type="entry name" value="DnaA_N"/>
    <property type="match status" value="1"/>
</dbReference>
<dbReference type="PRINTS" id="PR00051">
    <property type="entry name" value="DNAA"/>
</dbReference>
<dbReference type="SMART" id="SM00382">
    <property type="entry name" value="AAA"/>
    <property type="match status" value="1"/>
</dbReference>
<dbReference type="SMART" id="SM00760">
    <property type="entry name" value="Bac_DnaA_C"/>
    <property type="match status" value="1"/>
</dbReference>
<dbReference type="SUPFAM" id="SSF52540">
    <property type="entry name" value="P-loop containing nucleoside triphosphate hydrolases"/>
    <property type="match status" value="1"/>
</dbReference>
<dbReference type="SUPFAM" id="SSF48295">
    <property type="entry name" value="TrpR-like"/>
    <property type="match status" value="1"/>
</dbReference>
<dbReference type="PROSITE" id="PS01008">
    <property type="entry name" value="DNAA"/>
    <property type="match status" value="1"/>
</dbReference>
<sequence length="453" mass="51966">MSEKEIWEKVLEIAQEKLSAVSYSTFLKDTELYTIKDGEAIVLSSIPFNANWLNQQYAEIIQAILFDVVGYEVKPHFITTEELANYSNNETATPKETTKPSTETTEDNHVLGREQFNAHNTFDTFVIGPGNRFPHAASLAVAEAPAKAYNPLFIYGGVGLGKTHLMHAIGHHVLDNNPDAKVIYTSSEKFTNEFIKSIRDNEGEAFRERYRNIDVLLIDDIQFIQNKVQTQEEFFYTFNELHQNNKQIVISSDRPPKEIAQLEDRLRSRFEWGLIVDITPPDYETRMAILQKKIEEEKLDIPPEALNYIANQIQSNIRELEGALTRLLAYSQLLGKPITTELTAEALKDIIQAPKSKKITIQDIQKIVGQYYNVRIEDFSAKKRTKSIAYPRQIAMYLSRELTDFSLPKIGEEFGGRDHTTVIHAHEKISKDLKEDPIFKQEVENLEKEIRNV</sequence>